<name>ATPB_BRADU</name>
<gene>
    <name evidence="1" type="primary">atpD</name>
    <name type="ordered locus">bll0440</name>
</gene>
<protein>
    <recommendedName>
        <fullName evidence="1">ATP synthase subunit beta</fullName>
        <ecNumber evidence="1">7.1.2.2</ecNumber>
    </recommendedName>
    <alternativeName>
        <fullName evidence="1">ATP synthase F1 sector subunit beta</fullName>
    </alternativeName>
    <alternativeName>
        <fullName evidence="1">F-ATPase subunit beta</fullName>
    </alternativeName>
</protein>
<sequence>MAAQSGRVTQVIGAVVDVQFEGHLPAILNSLETKNGGNRLVLEVAQHLGESTVRTIAMDTTEGLVRGQEVTDTGSPIRVPVGEGTLGRIINVIGEPIDEAGPVKSEGLRAIHQEAPTYTDQSTEAEILVTGIKVVDLLAPYAKGGKIGLFGGAGVGKTVLIQELINNVAKAHGGYSVFAGVGERTREGNDLYHEFIESKVNADPHNPDPSVKSKCALVFGQMNEPPGARARVALTGLTIAEDFRDKGQDVLFFVDNIFRFTQAGSEVSALLGRIPSAVGYQPTLATDMGALQERITTTQKGSITSVQAIYVPADDLTDPAPATSFAHLDATTTLSRSIAEKGIYPAVDPLDSTSRMLSPLVVGEEHYAVARQVQQVLQRYKALQDIIAILGMDELSEEDKLTVARARKVERFMSQPFHVAEIFTGSPGKFVDLADTIKGFKGLVEGKYDHLPEAAFYMVGTIEEAVEKGKKLAAEAA</sequence>
<keyword id="KW-0066">ATP synthesis</keyword>
<keyword id="KW-0067">ATP-binding</keyword>
<keyword id="KW-0997">Cell inner membrane</keyword>
<keyword id="KW-1003">Cell membrane</keyword>
<keyword id="KW-0139">CF(1)</keyword>
<keyword id="KW-0375">Hydrogen ion transport</keyword>
<keyword id="KW-0406">Ion transport</keyword>
<keyword id="KW-0472">Membrane</keyword>
<keyword id="KW-0547">Nucleotide-binding</keyword>
<keyword id="KW-1185">Reference proteome</keyword>
<keyword id="KW-1278">Translocase</keyword>
<keyword id="KW-0813">Transport</keyword>
<feature type="chain" id="PRO_0000254225" description="ATP synthase subunit beta">
    <location>
        <begin position="1"/>
        <end position="477"/>
    </location>
</feature>
<feature type="binding site" evidence="1">
    <location>
        <begin position="151"/>
        <end position="158"/>
    </location>
    <ligand>
        <name>ATP</name>
        <dbReference type="ChEBI" id="CHEBI:30616"/>
    </ligand>
</feature>
<evidence type="ECO:0000255" key="1">
    <source>
        <dbReference type="HAMAP-Rule" id="MF_01347"/>
    </source>
</evidence>
<reference key="1">
    <citation type="journal article" date="2002" name="DNA Res.">
        <title>Complete genomic sequence of nitrogen-fixing symbiotic bacterium Bradyrhizobium japonicum USDA110.</title>
        <authorList>
            <person name="Kaneko T."/>
            <person name="Nakamura Y."/>
            <person name="Sato S."/>
            <person name="Minamisawa K."/>
            <person name="Uchiumi T."/>
            <person name="Sasamoto S."/>
            <person name="Watanabe A."/>
            <person name="Idesawa K."/>
            <person name="Iriguchi M."/>
            <person name="Kawashima K."/>
            <person name="Kohara M."/>
            <person name="Matsumoto M."/>
            <person name="Shimpo S."/>
            <person name="Tsuruoka H."/>
            <person name="Wada T."/>
            <person name="Yamada M."/>
            <person name="Tabata S."/>
        </authorList>
    </citation>
    <scope>NUCLEOTIDE SEQUENCE [LARGE SCALE GENOMIC DNA]</scope>
    <source>
        <strain>JCM 10833 / BCRC 13528 / IAM 13628 / NBRC 14792 / USDA 110</strain>
    </source>
</reference>
<comment type="function">
    <text evidence="1">Produces ATP from ADP in the presence of a proton gradient across the membrane. The catalytic sites are hosted primarily by the beta subunits.</text>
</comment>
<comment type="catalytic activity">
    <reaction evidence="1">
        <text>ATP + H2O + 4 H(+)(in) = ADP + phosphate + 5 H(+)(out)</text>
        <dbReference type="Rhea" id="RHEA:57720"/>
        <dbReference type="ChEBI" id="CHEBI:15377"/>
        <dbReference type="ChEBI" id="CHEBI:15378"/>
        <dbReference type="ChEBI" id="CHEBI:30616"/>
        <dbReference type="ChEBI" id="CHEBI:43474"/>
        <dbReference type="ChEBI" id="CHEBI:456216"/>
        <dbReference type="EC" id="7.1.2.2"/>
    </reaction>
</comment>
<comment type="subunit">
    <text evidence="1">F-type ATPases have 2 components, CF(1) - the catalytic core - and CF(0) - the membrane proton channel. CF(1) has five subunits: alpha(3), beta(3), gamma(1), delta(1), epsilon(1). CF(0) has three main subunits: a(1), b(2) and c(9-12). The alpha and beta chains form an alternating ring which encloses part of the gamma chain. CF(1) is attached to CF(0) by a central stalk formed by the gamma and epsilon chains, while a peripheral stalk is formed by the delta and b chains.</text>
</comment>
<comment type="subcellular location">
    <subcellularLocation>
        <location evidence="1">Cell inner membrane</location>
        <topology evidence="1">Peripheral membrane protein</topology>
    </subcellularLocation>
</comment>
<comment type="similarity">
    <text evidence="1">Belongs to the ATPase alpha/beta chains family.</text>
</comment>
<accession>Q89X74</accession>
<proteinExistence type="inferred from homology"/>
<dbReference type="EC" id="7.1.2.2" evidence="1"/>
<dbReference type="EMBL" id="BA000040">
    <property type="protein sequence ID" value="BAC45705.1"/>
    <property type="molecule type" value="Genomic_DNA"/>
</dbReference>
<dbReference type="RefSeq" id="NP_767080.1">
    <property type="nucleotide sequence ID" value="NC_004463.1"/>
</dbReference>
<dbReference type="RefSeq" id="WP_011083272.1">
    <property type="nucleotide sequence ID" value="NZ_CP011360.1"/>
</dbReference>
<dbReference type="SMR" id="Q89X74"/>
<dbReference type="FunCoup" id="Q89X74">
    <property type="interactions" value="578"/>
</dbReference>
<dbReference type="STRING" id="224911.AAV28_41450"/>
<dbReference type="EnsemblBacteria" id="BAC45705">
    <property type="protein sequence ID" value="BAC45705"/>
    <property type="gene ID" value="BAC45705"/>
</dbReference>
<dbReference type="GeneID" id="46495586"/>
<dbReference type="KEGG" id="bja:bll0440"/>
<dbReference type="PATRIC" id="fig|224911.44.peg.8970"/>
<dbReference type="eggNOG" id="COG0055">
    <property type="taxonomic scope" value="Bacteria"/>
</dbReference>
<dbReference type="HOGENOM" id="CLU_022398_0_2_5"/>
<dbReference type="InParanoid" id="Q89X74"/>
<dbReference type="OrthoDB" id="9801639at2"/>
<dbReference type="PhylomeDB" id="Q89X74"/>
<dbReference type="Proteomes" id="UP000002526">
    <property type="component" value="Chromosome"/>
</dbReference>
<dbReference type="GO" id="GO:0005886">
    <property type="term" value="C:plasma membrane"/>
    <property type="evidence" value="ECO:0007669"/>
    <property type="project" value="UniProtKB-SubCell"/>
</dbReference>
<dbReference type="GO" id="GO:0045259">
    <property type="term" value="C:proton-transporting ATP synthase complex"/>
    <property type="evidence" value="ECO:0007669"/>
    <property type="project" value="UniProtKB-KW"/>
</dbReference>
<dbReference type="GO" id="GO:0005524">
    <property type="term" value="F:ATP binding"/>
    <property type="evidence" value="ECO:0007669"/>
    <property type="project" value="UniProtKB-UniRule"/>
</dbReference>
<dbReference type="GO" id="GO:0016887">
    <property type="term" value="F:ATP hydrolysis activity"/>
    <property type="evidence" value="ECO:0007669"/>
    <property type="project" value="InterPro"/>
</dbReference>
<dbReference type="GO" id="GO:0046933">
    <property type="term" value="F:proton-transporting ATP synthase activity, rotational mechanism"/>
    <property type="evidence" value="ECO:0007669"/>
    <property type="project" value="UniProtKB-UniRule"/>
</dbReference>
<dbReference type="CDD" id="cd18110">
    <property type="entry name" value="ATP-synt_F1_beta_C"/>
    <property type="match status" value="1"/>
</dbReference>
<dbReference type="CDD" id="cd18115">
    <property type="entry name" value="ATP-synt_F1_beta_N"/>
    <property type="match status" value="1"/>
</dbReference>
<dbReference type="CDD" id="cd01133">
    <property type="entry name" value="F1-ATPase_beta_CD"/>
    <property type="match status" value="1"/>
</dbReference>
<dbReference type="FunFam" id="1.10.1140.10:FF:000001">
    <property type="entry name" value="ATP synthase subunit beta"/>
    <property type="match status" value="1"/>
</dbReference>
<dbReference type="FunFam" id="2.40.10.170:FF:000004">
    <property type="entry name" value="ATP synthase subunit beta"/>
    <property type="match status" value="1"/>
</dbReference>
<dbReference type="FunFam" id="3.40.50.300:FF:000026">
    <property type="entry name" value="ATP synthase subunit beta"/>
    <property type="match status" value="1"/>
</dbReference>
<dbReference type="Gene3D" id="2.40.10.170">
    <property type="match status" value="1"/>
</dbReference>
<dbReference type="Gene3D" id="1.10.1140.10">
    <property type="entry name" value="Bovine Mitochondrial F1-atpase, Atp Synthase Beta Chain, Chain D, domain 3"/>
    <property type="match status" value="1"/>
</dbReference>
<dbReference type="Gene3D" id="3.40.50.300">
    <property type="entry name" value="P-loop containing nucleotide triphosphate hydrolases"/>
    <property type="match status" value="1"/>
</dbReference>
<dbReference type="HAMAP" id="MF_01347">
    <property type="entry name" value="ATP_synth_beta_bact"/>
    <property type="match status" value="1"/>
</dbReference>
<dbReference type="InterPro" id="IPR003593">
    <property type="entry name" value="AAA+_ATPase"/>
</dbReference>
<dbReference type="InterPro" id="IPR055190">
    <property type="entry name" value="ATP-synt_VA_C"/>
</dbReference>
<dbReference type="InterPro" id="IPR005722">
    <property type="entry name" value="ATP_synth_F1_bsu"/>
</dbReference>
<dbReference type="InterPro" id="IPR020003">
    <property type="entry name" value="ATPase_a/bsu_AS"/>
</dbReference>
<dbReference type="InterPro" id="IPR050053">
    <property type="entry name" value="ATPase_alpha/beta_chains"/>
</dbReference>
<dbReference type="InterPro" id="IPR004100">
    <property type="entry name" value="ATPase_F1/V1/A1_a/bsu_N"/>
</dbReference>
<dbReference type="InterPro" id="IPR036121">
    <property type="entry name" value="ATPase_F1/V1/A1_a/bsu_N_sf"/>
</dbReference>
<dbReference type="InterPro" id="IPR000194">
    <property type="entry name" value="ATPase_F1/V1/A1_a/bsu_nucl-bd"/>
</dbReference>
<dbReference type="InterPro" id="IPR024034">
    <property type="entry name" value="ATPase_F1/V1_b/a_C"/>
</dbReference>
<dbReference type="InterPro" id="IPR027417">
    <property type="entry name" value="P-loop_NTPase"/>
</dbReference>
<dbReference type="NCBIfam" id="TIGR01039">
    <property type="entry name" value="atpD"/>
    <property type="match status" value="1"/>
</dbReference>
<dbReference type="PANTHER" id="PTHR15184">
    <property type="entry name" value="ATP SYNTHASE"/>
    <property type="match status" value="1"/>
</dbReference>
<dbReference type="PANTHER" id="PTHR15184:SF71">
    <property type="entry name" value="ATP SYNTHASE SUBUNIT BETA, MITOCHONDRIAL"/>
    <property type="match status" value="1"/>
</dbReference>
<dbReference type="Pfam" id="PF00006">
    <property type="entry name" value="ATP-synt_ab"/>
    <property type="match status" value="1"/>
</dbReference>
<dbReference type="Pfam" id="PF02874">
    <property type="entry name" value="ATP-synt_ab_N"/>
    <property type="match status" value="1"/>
</dbReference>
<dbReference type="Pfam" id="PF22919">
    <property type="entry name" value="ATP-synt_VA_C"/>
    <property type="match status" value="1"/>
</dbReference>
<dbReference type="PIRSF" id="PIRSF039072">
    <property type="entry name" value="ATPase_subunit_beta"/>
    <property type="match status" value="1"/>
</dbReference>
<dbReference type="SMART" id="SM00382">
    <property type="entry name" value="AAA"/>
    <property type="match status" value="1"/>
</dbReference>
<dbReference type="SUPFAM" id="SSF47917">
    <property type="entry name" value="C-terminal domain of alpha and beta subunits of F1 ATP synthase"/>
    <property type="match status" value="1"/>
</dbReference>
<dbReference type="SUPFAM" id="SSF50615">
    <property type="entry name" value="N-terminal domain of alpha and beta subunits of F1 ATP synthase"/>
    <property type="match status" value="1"/>
</dbReference>
<dbReference type="SUPFAM" id="SSF52540">
    <property type="entry name" value="P-loop containing nucleoside triphosphate hydrolases"/>
    <property type="match status" value="1"/>
</dbReference>
<dbReference type="PROSITE" id="PS00152">
    <property type="entry name" value="ATPASE_ALPHA_BETA"/>
    <property type="match status" value="1"/>
</dbReference>
<organism>
    <name type="scientific">Bradyrhizobium diazoefficiens (strain JCM 10833 / BCRC 13528 / IAM 13628 / NBRC 14792 / USDA 110)</name>
    <dbReference type="NCBI Taxonomy" id="224911"/>
    <lineage>
        <taxon>Bacteria</taxon>
        <taxon>Pseudomonadati</taxon>
        <taxon>Pseudomonadota</taxon>
        <taxon>Alphaproteobacteria</taxon>
        <taxon>Hyphomicrobiales</taxon>
        <taxon>Nitrobacteraceae</taxon>
        <taxon>Bradyrhizobium</taxon>
    </lineage>
</organism>